<name>SCN7A_MOUSE</name>
<gene>
    <name evidence="14" type="primary">Scn7a</name>
    <name evidence="10" type="synonym">Nag</name>
    <name evidence="10" type="synonym">Nav2</name>
    <name evidence="10" type="synonym">scl11</name>
</gene>
<keyword id="KW-1003">Cell membrane</keyword>
<keyword id="KW-1015">Disulfide bond</keyword>
<keyword id="KW-0325">Glycoprotein</keyword>
<keyword id="KW-0472">Membrane</keyword>
<keyword id="KW-0597">Phosphoprotein</keyword>
<keyword id="KW-1185">Reference proteome</keyword>
<keyword id="KW-0677">Repeat</keyword>
<keyword id="KW-0812">Transmembrane</keyword>
<keyword id="KW-1133">Transmembrane helix</keyword>
<reference key="1">
    <citation type="journal article" date="1994" name="J. Biol. Chem.">
        <title>Primary structure and differential expression during development and pregnancy of a novel voltage-gated sodium channel in the mouse.</title>
        <authorList>
            <person name="Felipe A."/>
            <person name="Knittle T.J."/>
            <person name="Doyle K.L."/>
            <person name="Tamkun M.M."/>
        </authorList>
    </citation>
    <scope>NUCLEOTIDE SEQUENCE [MRNA]</scope>
    <scope>TISSUE SPECIFICITY</scope>
</reference>
<reference key="2">
    <citation type="journal article" date="2009" name="PLoS Biol.">
        <title>Lineage-specific biology revealed by a finished genome assembly of the mouse.</title>
        <authorList>
            <person name="Church D.M."/>
            <person name="Goodstadt L."/>
            <person name="Hillier L.W."/>
            <person name="Zody M.C."/>
            <person name="Goldstein S."/>
            <person name="She X."/>
            <person name="Bult C.J."/>
            <person name="Agarwala R."/>
            <person name="Cherry J.L."/>
            <person name="DiCuccio M."/>
            <person name="Hlavina W."/>
            <person name="Kapustin Y."/>
            <person name="Meric P."/>
            <person name="Maglott D."/>
            <person name="Birtle Z."/>
            <person name="Marques A.C."/>
            <person name="Graves T."/>
            <person name="Zhou S."/>
            <person name="Teague B."/>
            <person name="Potamousis K."/>
            <person name="Churas C."/>
            <person name="Place M."/>
            <person name="Herschleb J."/>
            <person name="Runnheim R."/>
            <person name="Forrest D."/>
            <person name="Amos-Landgraf J."/>
            <person name="Schwartz D.C."/>
            <person name="Cheng Z."/>
            <person name="Lindblad-Toh K."/>
            <person name="Eichler E.E."/>
            <person name="Ponting C.P."/>
        </authorList>
    </citation>
    <scope>NUCLEOTIDE SEQUENCE [LARGE SCALE GENOMIC DNA]</scope>
    <source>
        <strain>C57BL/6J</strain>
    </source>
</reference>
<reference key="3">
    <citation type="journal article" date="2000" name="J. Neurosci.">
        <title>Nav2/NaG channel is involved in control of salt-intake behavior in the CNS.</title>
        <authorList>
            <person name="Watanabe E."/>
            <person name="Fujikawa A."/>
            <person name="Matsunaga H."/>
            <person name="Yasoshima Y."/>
            <person name="Sako N."/>
            <person name="Yamamoto T."/>
            <person name="Saegusa C."/>
            <person name="Noda M."/>
        </authorList>
    </citation>
    <scope>FUNCTION</scope>
    <scope>TISSUE SPECIFICITY</scope>
    <scope>DISRUPTION PHENOTYPE</scope>
</reference>
<reference key="4">
    <citation type="journal article" date="2002" name="Nat. Neurosci.">
        <title>Na(x) channel involved in CNS sodium-level sensing.</title>
        <authorList>
            <person name="Hiyama T.Y."/>
            <person name="Watanabe E."/>
            <person name="Ono K."/>
            <person name="Inenaga K."/>
            <person name="Tamkun M.M."/>
            <person name="Yoshida S."/>
            <person name="Noda M."/>
        </authorList>
    </citation>
    <scope>FUNCTION</scope>
    <scope>TRANSPORTER ACTIVITY</scope>
</reference>
<reference key="5">
    <citation type="journal article" date="2007" name="Neuron">
        <title>Glial Nax channels control lactate signaling to neurons for brain [Na+] sensing.</title>
        <authorList>
            <person name="Shimizu H."/>
            <person name="Watanabe E."/>
            <person name="Hiyama T.Y."/>
            <person name="Nagakura A."/>
            <person name="Fujikawa A."/>
            <person name="Okado H."/>
            <person name="Yanagawa Y."/>
            <person name="Obata K."/>
            <person name="Noda M."/>
        </authorList>
    </citation>
    <scope>FUNCTION</scope>
    <scope>TRANSPORTER ACTIVITY</scope>
    <scope>INTERACTION WITH ATP1A1</scope>
    <scope>SUBCELLULAR LOCATION</scope>
</reference>
<reference key="6">
    <citation type="journal article" date="2010" name="Cell">
        <title>A tissue-specific atlas of mouse protein phosphorylation and expression.</title>
        <authorList>
            <person name="Huttlin E.L."/>
            <person name="Jedrychowski M.P."/>
            <person name="Elias J.E."/>
            <person name="Goswami T."/>
            <person name="Rad R."/>
            <person name="Beausoleil S.A."/>
            <person name="Villen J."/>
            <person name="Haas W."/>
            <person name="Sowa M.E."/>
            <person name="Gygi S.P."/>
        </authorList>
    </citation>
    <scope>IDENTIFICATION BY MASS SPECTROMETRY [LARGE SCALE ANALYSIS]</scope>
</reference>
<reference key="7">
    <citation type="journal article" date="2016" name="Am. J. Physiol.">
        <title>Nax signaling evoked by an increase in [Na+] in CSF induces water intake via EET-mediated TRPV4 activation.</title>
        <authorList>
            <person name="Sakuta H."/>
            <person name="Nishihara E."/>
            <person name="Hiyama T.Y."/>
            <person name="Lin C.H."/>
            <person name="Noda M."/>
        </authorList>
    </citation>
    <scope>FUNCTION</scope>
    <scope>DISRUPTION PHENOTYPE</scope>
</reference>
<dbReference type="EMBL" id="L36179">
    <property type="protein sequence ID" value="AAA66192.1"/>
    <property type="molecule type" value="mRNA"/>
</dbReference>
<dbReference type="EMBL" id="AL928623">
    <property type="status" value="NOT_ANNOTATED_CDS"/>
    <property type="molecule type" value="Genomic_DNA"/>
</dbReference>
<dbReference type="EMBL" id="AL928720">
    <property type="status" value="NOT_ANNOTATED_CDS"/>
    <property type="molecule type" value="Genomic_DNA"/>
</dbReference>
<dbReference type="CCDS" id="CCDS16081.1"/>
<dbReference type="PIR" id="A55138">
    <property type="entry name" value="A55138"/>
</dbReference>
<dbReference type="RefSeq" id="NP_033161.2">
    <property type="nucleotide sequence ID" value="NM_009135.2"/>
</dbReference>
<dbReference type="SMR" id="B1AYL1"/>
<dbReference type="FunCoup" id="B1AYL1">
    <property type="interactions" value="14"/>
</dbReference>
<dbReference type="IntAct" id="B1AYL1">
    <property type="interactions" value="11"/>
</dbReference>
<dbReference type="MINT" id="B1AYL1"/>
<dbReference type="STRING" id="10090.ENSMUSP00000042405"/>
<dbReference type="GlyGen" id="B1AYL1">
    <property type="glycosylation" value="8 sites, 4 N-linked glycans (7 sites)"/>
</dbReference>
<dbReference type="PhosphoSitePlus" id="B1AYL1"/>
<dbReference type="SwissPalm" id="B1AYL1"/>
<dbReference type="jPOST" id="B1AYL1"/>
<dbReference type="PaxDb" id="10090-ENSMUSP00000042405"/>
<dbReference type="PeptideAtlas" id="B1AYL1"/>
<dbReference type="ProteomicsDB" id="359838"/>
<dbReference type="Antibodypedia" id="1383">
    <property type="antibodies" value="131 antibodies from 24 providers"/>
</dbReference>
<dbReference type="DNASU" id="20272"/>
<dbReference type="Ensembl" id="ENSMUST00000042792.7">
    <property type="protein sequence ID" value="ENSMUSP00000042405.7"/>
    <property type="gene ID" value="ENSMUSG00000034810.8"/>
</dbReference>
<dbReference type="GeneID" id="20272"/>
<dbReference type="KEGG" id="mmu:20272"/>
<dbReference type="UCSC" id="uc008jxf.2">
    <property type="organism name" value="mouse"/>
</dbReference>
<dbReference type="AGR" id="MGI:102965"/>
<dbReference type="CTD" id="6332"/>
<dbReference type="MGI" id="MGI:102965">
    <property type="gene designation" value="Scn7a"/>
</dbReference>
<dbReference type="VEuPathDB" id="HostDB:ENSMUSG00000034810"/>
<dbReference type="eggNOG" id="KOG2301">
    <property type="taxonomic scope" value="Eukaryota"/>
</dbReference>
<dbReference type="GeneTree" id="ENSGT00940000162042"/>
<dbReference type="HOGENOM" id="CLU_000540_5_0_1"/>
<dbReference type="InParanoid" id="B1AYL1"/>
<dbReference type="OMA" id="ENSWFKC"/>
<dbReference type="OrthoDB" id="416585at2759"/>
<dbReference type="PhylomeDB" id="B1AYL1"/>
<dbReference type="TreeFam" id="TF323985"/>
<dbReference type="BioGRID-ORCS" id="20272">
    <property type="hits" value="1 hit in 78 CRISPR screens"/>
</dbReference>
<dbReference type="ChiTaRS" id="Scn7a">
    <property type="organism name" value="mouse"/>
</dbReference>
<dbReference type="Proteomes" id="UP000000589">
    <property type="component" value="Chromosome 2"/>
</dbReference>
<dbReference type="RNAct" id="B1AYL1">
    <property type="molecule type" value="protein"/>
</dbReference>
<dbReference type="Bgee" id="ENSMUSG00000034810">
    <property type="expression patterns" value="Expressed in left lung lobe and 134 other cell types or tissues"/>
</dbReference>
<dbReference type="GO" id="GO:0097386">
    <property type="term" value="C:glial cell projection"/>
    <property type="evidence" value="ECO:0000314"/>
    <property type="project" value="MGI"/>
</dbReference>
<dbReference type="GO" id="GO:0005886">
    <property type="term" value="C:plasma membrane"/>
    <property type="evidence" value="ECO:0000314"/>
    <property type="project" value="UniProtKB"/>
</dbReference>
<dbReference type="GO" id="GO:0001518">
    <property type="term" value="C:voltage-gated sodium channel complex"/>
    <property type="evidence" value="ECO:0007669"/>
    <property type="project" value="InterPro"/>
</dbReference>
<dbReference type="GO" id="GO:1990760">
    <property type="term" value="F:osmolarity-sensing monoatomic cation channel activity"/>
    <property type="evidence" value="ECO:0000314"/>
    <property type="project" value="UniProtKB"/>
</dbReference>
<dbReference type="GO" id="GO:0005272">
    <property type="term" value="F:sodium channel activity"/>
    <property type="evidence" value="ECO:0000314"/>
    <property type="project" value="UniProtKB"/>
</dbReference>
<dbReference type="GO" id="GO:0044325">
    <property type="term" value="F:transmembrane transporter binding"/>
    <property type="evidence" value="ECO:0000353"/>
    <property type="project" value="UniProtKB"/>
</dbReference>
<dbReference type="GO" id="GO:0005248">
    <property type="term" value="F:voltage-gated sodium channel activity"/>
    <property type="evidence" value="ECO:0007669"/>
    <property type="project" value="InterPro"/>
</dbReference>
<dbReference type="GO" id="GO:0019725">
    <property type="term" value="P:cellular homeostasis"/>
    <property type="evidence" value="ECO:0000314"/>
    <property type="project" value="MGI"/>
</dbReference>
<dbReference type="GO" id="GO:0007231">
    <property type="term" value="P:osmosensory signaling pathway"/>
    <property type="evidence" value="ECO:0000315"/>
    <property type="project" value="UniProtKB"/>
</dbReference>
<dbReference type="GO" id="GO:0009617">
    <property type="term" value="P:response to bacterium"/>
    <property type="evidence" value="ECO:0000270"/>
    <property type="project" value="MGI"/>
</dbReference>
<dbReference type="GO" id="GO:0055078">
    <property type="term" value="P:sodium ion homeostasis"/>
    <property type="evidence" value="ECO:0000314"/>
    <property type="project" value="MGI"/>
</dbReference>
<dbReference type="CDD" id="cd13433">
    <property type="entry name" value="Na_channel_gate"/>
    <property type="match status" value="1"/>
</dbReference>
<dbReference type="FunFam" id="1.10.238.10:FF:000171">
    <property type="entry name" value="Sodium channel protein"/>
    <property type="match status" value="1"/>
</dbReference>
<dbReference type="FunFam" id="1.10.287.70:FF:000091">
    <property type="entry name" value="Sodium channel protein"/>
    <property type="match status" value="1"/>
</dbReference>
<dbReference type="FunFam" id="1.10.287.70:FF:000112">
    <property type="entry name" value="Sodium channel protein"/>
    <property type="match status" value="1"/>
</dbReference>
<dbReference type="FunFam" id="1.20.120.350:FF:000059">
    <property type="entry name" value="Sodium channel protein"/>
    <property type="match status" value="1"/>
</dbReference>
<dbReference type="FunFam" id="1.20.120.350:FF:000083">
    <property type="entry name" value="Sodium channel protein"/>
    <property type="match status" value="1"/>
</dbReference>
<dbReference type="FunFam" id="1.20.5.1190:FF:000006">
    <property type="entry name" value="Sodium channel protein"/>
    <property type="match status" value="1"/>
</dbReference>
<dbReference type="Gene3D" id="1.10.287.70">
    <property type="match status" value="4"/>
</dbReference>
<dbReference type="Gene3D" id="1.10.238.10">
    <property type="entry name" value="EF-hand"/>
    <property type="match status" value="1"/>
</dbReference>
<dbReference type="Gene3D" id="1.20.5.1190">
    <property type="entry name" value="iswi atpase"/>
    <property type="match status" value="1"/>
</dbReference>
<dbReference type="Gene3D" id="1.20.120.350">
    <property type="entry name" value="Voltage-gated potassium channels. Chain C"/>
    <property type="match status" value="4"/>
</dbReference>
<dbReference type="InterPro" id="IPR005821">
    <property type="entry name" value="Ion_trans_dom"/>
</dbReference>
<dbReference type="InterPro" id="IPR001696">
    <property type="entry name" value="Na_channel_asu"/>
</dbReference>
<dbReference type="InterPro" id="IPR044564">
    <property type="entry name" value="Na_chnl_inactivation_gate"/>
</dbReference>
<dbReference type="InterPro" id="IPR010526">
    <property type="entry name" value="Na_trans_assoc_dom"/>
</dbReference>
<dbReference type="InterPro" id="IPR043203">
    <property type="entry name" value="VGCC_Ca_Na"/>
</dbReference>
<dbReference type="InterPro" id="IPR027359">
    <property type="entry name" value="Volt_channel_dom_sf"/>
</dbReference>
<dbReference type="PANTHER" id="PTHR10037:SF14">
    <property type="entry name" value="SODIUM CHANNEL PROTEIN"/>
    <property type="match status" value="1"/>
</dbReference>
<dbReference type="PANTHER" id="PTHR10037">
    <property type="entry name" value="VOLTAGE-GATED CATION CHANNEL CALCIUM AND SODIUM"/>
    <property type="match status" value="1"/>
</dbReference>
<dbReference type="Pfam" id="PF00520">
    <property type="entry name" value="Ion_trans"/>
    <property type="match status" value="4"/>
</dbReference>
<dbReference type="Pfam" id="PF24609">
    <property type="entry name" value="IQ_SCN5A_C"/>
    <property type="match status" value="1"/>
</dbReference>
<dbReference type="Pfam" id="PF06512">
    <property type="entry name" value="Na_trans_assoc"/>
    <property type="match status" value="1"/>
</dbReference>
<dbReference type="PRINTS" id="PR00170">
    <property type="entry name" value="NACHANNEL"/>
</dbReference>
<dbReference type="SUPFAM" id="SSF81324">
    <property type="entry name" value="Voltage-gated potassium channels"/>
    <property type="match status" value="4"/>
</dbReference>
<protein>
    <recommendedName>
        <fullName evidence="13">Sodium channel protein type 7 subunit alpha</fullName>
    </recommendedName>
    <alternativeName>
        <fullName evidence="11">Nax channel</fullName>
    </alternativeName>
    <alternativeName>
        <fullName evidence="12">Sodium channel Nav2.3</fullName>
    </alternativeName>
</protein>
<organism>
    <name type="scientific">Mus musculus</name>
    <name type="common">Mouse</name>
    <dbReference type="NCBI Taxonomy" id="10090"/>
    <lineage>
        <taxon>Eukaryota</taxon>
        <taxon>Metazoa</taxon>
        <taxon>Chordata</taxon>
        <taxon>Craniata</taxon>
        <taxon>Vertebrata</taxon>
        <taxon>Euteleostomi</taxon>
        <taxon>Mammalia</taxon>
        <taxon>Eutheria</taxon>
        <taxon>Euarchontoglires</taxon>
        <taxon>Glires</taxon>
        <taxon>Rodentia</taxon>
        <taxon>Myomorpha</taxon>
        <taxon>Muroidea</taxon>
        <taxon>Muridae</taxon>
        <taxon>Murinae</taxon>
        <taxon>Mus</taxon>
        <taxon>Mus</taxon>
    </lineage>
</organism>
<sequence length="1681" mass="192177">MLTSPEPKGLVPFTTESLELIENHIAKKCNEDPEEEEGLKPSRNLEAGKRLPIPYGTLPRGTVSEPLEDVDPYYYVKRNTFMVLNRSRVIFRFNAVSIFCTLSPLNSLRRAAIKALVHPLFRLLILISVLTDSILMCMSNLPEWILAIENTLLGIYAFEILVKVIARGIWAGSFSFLGDLWNWLDFSVTLFELITRFSPLSSFLMLKTIRTFRILKIIPLNHGLQSIVMTLAQCLKKLFGAIALALFFLAVFSLLGMGLFMGNLKHKCLRWPEENENETLHNRTGSLNYSPERINFYYMEGAKYALLCGNRTDAGQCPEGYVCVKEGTNPDNGFTSFDNFGWSLLAMFRLMTQDYPELLYHQILYASGKVYMIFFVMISFWFAFYLTSLFLGILTMTYEKEKQRACEESGGLDPKCQQTVKELDEENDAAEMETTQIEMKKRSPTSINTTLDILEDTTLGHREEPETSRKKCPICWHKFIKTCFIWKCSPCWVKLNEFADRVITHPLADLFLVICIVLNICFLALEHFPMSEELRSLLHVGNLVFIGIYTIEMILKIIAMHPYGYFQISWNIFDSILVVLELTEILLADVEGLAVLITVPLIFIKLGKYGPPFKSLMRILGSSLMALKDLVLLLCIFVYFSAVFGMKLFGRSYKDCVCHIKEDCQPQRWHMSDFLHAYMTVFRILCGEWIETLWECMEVAGQAWCIPFYMMVILIGNLLILYLFVTLVSSFSYYDATSEVNKEAKNLQLAMARIKSGINSMLLKLMCTERSVPTEATDQICDPSVKENISGHTLSELSNTQTFLRYKDQSSSTEKTPVTESESQSLIASPSASETVPIASGESDIENLDNKETRSKSGNGGSKEKMKQSSSSECSTVDIAISEEEEMVYEHEKSKLHKNGYERKSSTGQISRESRNGKIWKNIRKTCCKIVENSWFECFIGLVTLLCTGTLALEDIYIDQRKTTKILLEYADMIFAYIFILEMLLKWVAYGFKAFFSNNWYKLDFMVVIVFCLSLIGKTREDLNPLTSIKFLRALRVLSQFERMKVVLRALIKTTLPTVSVFLVCLMIWLLFSVIGVQLFAGKFYECIDPTKGERFPVFEVMNKSQCEKLLFNESMPWENAKLNFDNVGNGFLSLLQVATFNGWISIMNSAIDSVGVNMQPSFEYNLYMYSYFIIFVIFGLFLPLCMLIGVIIRNFNKQKIKQGGSNIFITVKQKKQYRALKKLLYADVQKPTPRPRNKFQGFLFDLVTHRVFNVIIILLICFQATTIMIQKDEQSPQMETAIFWMNSIFVMLFTLECILKLTAFRCHYFTSAWNVHDFMVVIFSITGLLLPLTIGQYFVPPSLVQLILLSRVIHILRPGKGPKVFHDLMLPLILALPALLNISLLIFLVMFIYAIFGMYNFAYVKKEAGINDVSNFETFGSSMLCLFQVTTFSGWDGMLDAIFNSQWSDCDPDKINPGTQVKGDCGSPSVGISYFVSYILISWLIIVNMYIVLIMEFLSIPSQKKSRTLSEDDFRRFFRVWNRFDPDRTQYIDSSKLSDFAAALDPPLFMAKPNKGQLVAMDLPMAAGDRIHCLDILLAFTKRVMGKDERVEKILSEIESGFMLANPFKITYEPITTTLKRKQEAVSATIIQRAYKSYRLRQNDKNVSDTPAIDDRRDDLTSKGAHSGKIEEKASIQTQI</sequence>
<feature type="chain" id="PRO_0000459999" description="Sodium channel protein type 7 subunit alpha">
    <location>
        <begin position="1"/>
        <end position="1681"/>
    </location>
</feature>
<feature type="topological domain" description="Cytoplasmic" evidence="13">
    <location>
        <begin position="1"/>
        <end position="118"/>
    </location>
</feature>
<feature type="transmembrane region" description="Helical; Name=S1 of repeat I" evidence="2">
    <location>
        <begin position="119"/>
        <end position="138"/>
    </location>
</feature>
<feature type="topological domain" description="Extracellular" evidence="13">
    <location>
        <begin position="139"/>
        <end position="142"/>
    </location>
</feature>
<feature type="transmembrane region" description="Helical; Name=S2 of repeat I" evidence="2">
    <location>
        <begin position="143"/>
        <end position="168"/>
    </location>
</feature>
<feature type="topological domain" description="Cytoplasmic" evidence="13">
    <location>
        <begin position="169"/>
        <end position="179"/>
    </location>
</feature>
<feature type="transmembrane region" description="Helical; Name=S3 of repeat I" evidence="2">
    <location>
        <begin position="180"/>
        <end position="197"/>
    </location>
</feature>
<feature type="topological domain" description="Extracellular" evidence="13">
    <location>
        <begin position="198"/>
        <end position="201"/>
    </location>
</feature>
<feature type="transmembrane region" description="Helical; Name=S4 of repeat I" evidence="2">
    <location>
        <begin position="202"/>
        <end position="220"/>
    </location>
</feature>
<feature type="topological domain" description="Cytoplasmic" evidence="13">
    <location>
        <begin position="221"/>
        <end position="238"/>
    </location>
</feature>
<feature type="transmembrane region" description="Helical; Name=S5 of repeat I" evidence="2">
    <location>
        <begin position="239"/>
        <end position="260"/>
    </location>
</feature>
<feature type="topological domain" description="Extracellular" evidence="13">
    <location>
        <begin position="261"/>
        <end position="339"/>
    </location>
</feature>
<feature type="intramembrane region" description="Pore-forming" evidence="1">
    <location>
        <begin position="340"/>
        <end position="367"/>
    </location>
</feature>
<feature type="topological domain" description="Extracellular" evidence="13">
    <location>
        <position position="368"/>
    </location>
</feature>
<feature type="transmembrane region" description="Helical; Name=S6 of repeat I" evidence="2">
    <location>
        <begin position="369"/>
        <end position="408"/>
    </location>
</feature>
<feature type="topological domain" description="Cytoplasmic" evidence="13">
    <location>
        <begin position="409"/>
        <end position="506"/>
    </location>
</feature>
<feature type="transmembrane region" description="Helical; Name=S1 of repeat II" evidence="2">
    <location>
        <begin position="507"/>
        <end position="522"/>
    </location>
</feature>
<feature type="topological domain" description="Extracellular" evidence="13">
    <location>
        <begin position="523"/>
        <end position="531"/>
    </location>
</feature>
<feature type="transmembrane region" description="Helical; Name=S2 of repeat II" evidence="2">
    <location>
        <begin position="532"/>
        <end position="560"/>
    </location>
</feature>
<feature type="topological domain" description="Cytoplasmic" evidence="13">
    <location>
        <begin position="561"/>
        <end position="569"/>
    </location>
</feature>
<feature type="transmembrane region" description="Helical; Name=S3 of repeat II" evidence="2">
    <location>
        <begin position="570"/>
        <end position="587"/>
    </location>
</feature>
<feature type="topological domain" description="Extracellular" evidence="13">
    <location>
        <begin position="588"/>
        <end position="593"/>
    </location>
</feature>
<feature type="transmembrane region" description="Helical; Name=S4 of repeat II" evidence="2">
    <location>
        <begin position="594"/>
        <end position="609"/>
    </location>
</feature>
<feature type="topological domain" description="Cytoplasmic" evidence="13">
    <location>
        <begin position="610"/>
        <end position="626"/>
    </location>
</feature>
<feature type="transmembrane region" description="Helical; Name=S5 of repeat II" evidence="2">
    <location>
        <begin position="627"/>
        <end position="655"/>
    </location>
</feature>
<feature type="topological domain" description="Extracellular" evidence="13">
    <location>
        <begin position="656"/>
        <end position="673"/>
    </location>
</feature>
<feature type="intramembrane region" description="Pore-forming" evidence="1">
    <location>
        <begin position="674"/>
        <end position="700"/>
    </location>
</feature>
<feature type="topological domain" description="Extracellular" evidence="13">
    <location>
        <position position="701"/>
    </location>
</feature>
<feature type="transmembrane region" description="Helical; Name=S6 of repeat II" evidence="2">
    <location>
        <begin position="702"/>
        <end position="732"/>
    </location>
</feature>
<feature type="topological domain" description="Cytoplasmic" evidence="13">
    <location>
        <begin position="733"/>
        <end position="934"/>
    </location>
</feature>
<feature type="transmembrane region" description="Helical; Name=S1 of repeat III" evidence="2">
    <location>
        <begin position="935"/>
        <end position="953"/>
    </location>
</feature>
<feature type="topological domain" description="Extracellular" evidence="13">
    <location>
        <begin position="954"/>
        <end position="961"/>
    </location>
</feature>
<feature type="transmembrane region" description="Helical; Name=S2 of repeat III" evidence="2">
    <location>
        <begin position="962"/>
        <end position="990"/>
    </location>
</feature>
<feature type="topological domain" description="Cytoplasmic" evidence="13">
    <location>
        <begin position="991"/>
        <end position="998"/>
    </location>
</feature>
<feature type="transmembrane region" description="Helical; Name=S3 of repeat III" evidence="2">
    <location>
        <begin position="999"/>
        <end position="1020"/>
    </location>
</feature>
<feature type="topological domain" description="Extracellular" evidence="13">
    <location>
        <position position="1021"/>
    </location>
</feature>
<feature type="transmembrane region" description="Helical; Name=S4 of repeat III" evidence="2">
    <location>
        <begin position="1022"/>
        <end position="1040"/>
    </location>
</feature>
<feature type="topological domain" description="Cytoplasmic" evidence="13">
    <location>
        <begin position="1041"/>
        <end position="1055"/>
    </location>
</feature>
<feature type="transmembrane region" description="Helical; Name=S5 of repeat III" evidence="2">
    <location>
        <begin position="1056"/>
        <end position="1080"/>
    </location>
</feature>
<feature type="topological domain" description="Extracellular" evidence="13">
    <location>
        <begin position="1081"/>
        <end position="1127"/>
    </location>
</feature>
<feature type="intramembrane region" description="Pore-forming" evidence="1">
    <location>
        <begin position="1128"/>
        <end position="1154"/>
    </location>
</feature>
<feature type="topological domain" description="Extracellular" evidence="13">
    <location>
        <begin position="1155"/>
        <end position="1167"/>
    </location>
</feature>
<feature type="transmembrane region" description="Helical; Name=S6 of repeat III" evidence="2">
    <location>
        <begin position="1168"/>
        <end position="1202"/>
    </location>
</feature>
<feature type="topological domain" description="Cytoplasmic" evidence="13">
    <location>
        <begin position="1203"/>
        <end position="1250"/>
    </location>
</feature>
<feature type="transmembrane region" description="Helical; Name=S1 of repeat IV" evidence="2">
    <location>
        <begin position="1251"/>
        <end position="1272"/>
    </location>
</feature>
<feature type="topological domain" description="Extracellular" evidence="13">
    <location>
        <begin position="1273"/>
        <end position="1276"/>
    </location>
</feature>
<feature type="transmembrane region" description="Helical; Name=S2 of repeat IV" evidence="2">
    <location>
        <begin position="1277"/>
        <end position="1305"/>
    </location>
</feature>
<feature type="topological domain" description="Cytoplasmic" evidence="13">
    <location>
        <begin position="1306"/>
        <end position="1312"/>
    </location>
</feature>
<feature type="transmembrane region" description="Helical; Name=S3 of repeat IV" evidence="2">
    <location>
        <begin position="1313"/>
        <end position="1338"/>
    </location>
</feature>
<feature type="topological domain" description="Extracellular" evidence="13">
    <location>
        <begin position="1339"/>
        <end position="1341"/>
    </location>
</feature>
<feature type="transmembrane region" description="Helical; Name=S4 of repeat IV" evidence="2">
    <location>
        <begin position="1342"/>
        <end position="1362"/>
    </location>
</feature>
<feature type="topological domain" description="Cytoplasmic" evidence="13">
    <location>
        <begin position="1363"/>
        <end position="1377"/>
    </location>
</feature>
<feature type="transmembrane region" description="Helical; Name=S5 of repeat IV" evidence="2">
    <location>
        <begin position="1378"/>
        <end position="1402"/>
    </location>
</feature>
<feature type="topological domain" description="Extracellular" evidence="13">
    <location>
        <begin position="1403"/>
        <end position="1420"/>
    </location>
</feature>
<feature type="intramembrane region" description="Pore-forming" evidence="1">
    <location>
        <begin position="1421"/>
        <end position="1444"/>
    </location>
</feature>
<feature type="topological domain" description="Extracellular" evidence="13">
    <location>
        <begin position="1445"/>
        <end position="1468"/>
    </location>
</feature>
<feature type="transmembrane region" description="Helical; Name=S6 of repeat IV" evidence="2">
    <location>
        <begin position="1469"/>
        <end position="1504"/>
    </location>
</feature>
<feature type="topological domain" description="Cytoplasmic" evidence="13">
    <location>
        <begin position="1505"/>
        <end position="1681"/>
    </location>
</feature>
<feature type="repeat" description="I" evidence="2">
    <location>
        <begin position="101"/>
        <end position="402"/>
    </location>
</feature>
<feature type="repeat" description="II" evidence="2">
    <location>
        <begin position="488"/>
        <end position="757"/>
    </location>
</feature>
<feature type="repeat" description="III" evidence="2">
    <location>
        <begin position="916"/>
        <end position="1224"/>
    </location>
</feature>
<feature type="repeat" description="IV" evidence="2">
    <location>
        <begin position="1233"/>
        <end position="1531"/>
    </location>
</feature>
<feature type="region of interest" description="Disordered" evidence="4">
    <location>
        <begin position="806"/>
        <end position="875"/>
    </location>
</feature>
<feature type="region of interest" description="Disordered" evidence="4">
    <location>
        <begin position="1647"/>
        <end position="1681"/>
    </location>
</feature>
<feature type="compositionally biased region" description="Polar residues" evidence="4">
    <location>
        <begin position="806"/>
        <end position="834"/>
    </location>
</feature>
<feature type="compositionally biased region" description="Basic and acidic residues" evidence="4">
    <location>
        <begin position="1647"/>
        <end position="1662"/>
    </location>
</feature>
<feature type="modified residue" description="Phosphoserine" evidence="2">
    <location>
        <position position="843"/>
    </location>
</feature>
<feature type="glycosylation site" description="N-linked (GlcNAc...) asparagine" evidence="3">
    <location>
        <position position="277"/>
    </location>
</feature>
<feature type="glycosylation site" description="N-linked (GlcNAc...) asparagine" evidence="3">
    <location>
        <position position="282"/>
    </location>
</feature>
<feature type="glycosylation site" description="N-linked (GlcNAc...) asparagine" evidence="3">
    <location>
        <position position="288"/>
    </location>
</feature>
<feature type="glycosylation site" description="N-linked (GlcNAc...) asparagine" evidence="3">
    <location>
        <position position="310"/>
    </location>
</feature>
<feature type="glycosylation site" description="N-linked (GlcNAc...) asparagine" evidence="3">
    <location>
        <position position="1103"/>
    </location>
</feature>
<feature type="glycosylation site" description="N-linked (GlcNAc...) asparagine" evidence="3">
    <location>
        <position position="1113"/>
    </location>
</feature>
<feature type="disulfide bond" evidence="2">
    <location>
        <begin position="268"/>
        <end position="308"/>
    </location>
</feature>
<feature type="disulfide bond" evidence="2">
    <location>
        <begin position="658"/>
        <end position="664"/>
    </location>
</feature>
<feature type="disulfide bond" evidence="2">
    <location>
        <begin position="696"/>
        <end position="705"/>
    </location>
</feature>
<feature type="disulfide bond" evidence="2">
    <location>
        <begin position="1087"/>
        <end position="1107"/>
    </location>
</feature>
<feature type="disulfide bond" evidence="2">
    <location>
        <begin position="1451"/>
        <end position="1466"/>
    </location>
</feature>
<feature type="sequence conflict" description="In Ref. 1; AAA66192." evidence="13" ref="1">
    <original>M</original>
    <variation>L</variation>
    <location>
        <position position="553"/>
    </location>
</feature>
<evidence type="ECO:0000250" key="1">
    <source>
        <dbReference type="UniProtKB" id="D0E0C2"/>
    </source>
</evidence>
<evidence type="ECO:0000250" key="2">
    <source>
        <dbReference type="UniProtKB" id="Q01118"/>
    </source>
</evidence>
<evidence type="ECO:0000255" key="3"/>
<evidence type="ECO:0000256" key="4">
    <source>
        <dbReference type="SAM" id="MobiDB-lite"/>
    </source>
</evidence>
<evidence type="ECO:0000269" key="5">
    <source>
    </source>
</evidence>
<evidence type="ECO:0000269" key="6">
    <source>
    </source>
</evidence>
<evidence type="ECO:0000269" key="7">
    <source>
    </source>
</evidence>
<evidence type="ECO:0000269" key="8">
    <source>
    </source>
</evidence>
<evidence type="ECO:0000269" key="9">
    <source>
    </source>
</evidence>
<evidence type="ECO:0000303" key="10">
    <source>
    </source>
</evidence>
<evidence type="ECO:0000303" key="11">
    <source>
    </source>
</evidence>
<evidence type="ECO:0000303" key="12">
    <source>
    </source>
</evidence>
<evidence type="ECO:0000305" key="13"/>
<evidence type="ECO:0000312" key="14">
    <source>
        <dbReference type="MGI" id="MGI:102965"/>
    </source>
</evidence>
<accession>B1AYL1</accession>
<accession>Q62467</accession>
<comment type="function">
    <text evidence="2 5 6 7 8">Sodium leak channel functioning as an osmosensor regulating sodium ion levels in various tissues and organs. While most sodium channels are voltage-gated, SCN7A is not and lets sodium flow through membrane along its concentration gradient (PubMed:11027237, PubMed:11992118, PubMed:17408578, PubMed:27252474). In glial cells of the central nervous system, senses body-fluid sodium levels and controls salt intake behavior as well as voluntary water intake through activation of nearby neurons to maintain appropriate sodium levels in the body (PubMed:11027237, PubMed:17408578, PubMed:27252474). By mediating sodium influx into keratinocytes, also plays a role in skin barrier homeostasis (By similarity).</text>
</comment>
<comment type="catalytic activity">
    <reaction evidence="6 7">
        <text>Na(+)(in) = Na(+)(out)</text>
        <dbReference type="Rhea" id="RHEA:34963"/>
        <dbReference type="ChEBI" id="CHEBI:29101"/>
    </reaction>
</comment>
<comment type="subunit">
    <text evidence="2 7">The sodium channel formed by SCN7A is probably a heterooligomeric complex consisting of the ion conducting pore forming alpha subunit SCN7A and regulatory beta subunits such as SCN3B (By similarity). Interacts with ATP1A1; activates ATP1A1 and thereby indirectly signals to nearby neurons to regulate sodium homeostasis (PubMed:17408578).</text>
</comment>
<comment type="interaction">
    <interactant intactId="EBI-8068354">
        <id>B1AYL1</id>
    </interactant>
    <interactant intactId="EBI-389325">
        <id>Q62696</id>
        <label>Dlg1</label>
    </interactant>
    <organismsDiffer>true</organismsDiffer>
    <experiments>3</experiments>
</comment>
<comment type="subcellular location">
    <subcellularLocation>
        <location evidence="7">Cell membrane</location>
        <topology evidence="3">Multi-pass membrane protein</topology>
    </subcellularLocation>
</comment>
<comment type="tissue specificity">
    <text evidence="5 9">Not tissue specific but widely expressed (PubMed:11027237, PubMed:7982916). Expressed in regions of the central nervous system that control body fluid ionic balance (PubMed:11027237).</text>
</comment>
<comment type="domain">
    <text evidence="13">The sequence contains 4 internal repeats, each with 5 hydrophobic segments (S1, S2, S3, S5, S6) and one positively charged segment (S4). Segments S4 are probably the voltage-sensors and are characterized by a series of positively charged amino acids at every third position.</text>
</comment>
<comment type="disruption phenotype">
    <text evidence="5 8">Homozygous knockout mice are healthy, fertile, and apparently normal but display abnormal salt-intake behavior under water- and salt-depleted conditions without altered taste reception (PubMed:11027237). The voluntary water intake normally induced by sodium concentration increase in body fluid is impaired (PubMed:27252474).</text>
</comment>
<comment type="similarity">
    <text evidence="13">Belongs to the sodium channel (TC 1.A.1.10) family. SCN7A subfamily.</text>
</comment>
<proteinExistence type="evidence at protein level"/>